<comment type="function">
    <text evidence="1">One of the primary rRNA binding proteins, this protein initially binds near the 5'-end of the 23S rRNA. It is important during the early stages of 50S assembly. It makes multiple contacts with different domains of the 23S rRNA in the assembled 50S subunit and ribosome.</text>
</comment>
<comment type="function">
    <text evidence="1">Forms part of the polypeptide exit tunnel.</text>
</comment>
<comment type="subunit">
    <text evidence="1">Part of the 50S ribosomal subunit.</text>
</comment>
<comment type="similarity">
    <text evidence="1">Belongs to the universal ribosomal protein uL4 family.</text>
</comment>
<name>RL4_PROM2</name>
<proteinExistence type="inferred from homology"/>
<keyword id="KW-0687">Ribonucleoprotein</keyword>
<keyword id="KW-0689">Ribosomal protein</keyword>
<keyword id="KW-0694">RNA-binding</keyword>
<keyword id="KW-0699">rRNA-binding</keyword>
<protein>
    <recommendedName>
        <fullName evidence="1">Large ribosomal subunit protein uL4</fullName>
    </recommendedName>
    <alternativeName>
        <fullName evidence="3">50S ribosomal protein L4</fullName>
    </alternativeName>
</protein>
<gene>
    <name evidence="1" type="primary">rplD</name>
    <name evidence="1" type="synonym">rpl4</name>
    <name type="ordered locus">P9215_18291</name>
</gene>
<feature type="chain" id="PRO_1000067597" description="Large ribosomal subunit protein uL4">
    <location>
        <begin position="1"/>
        <end position="210"/>
    </location>
</feature>
<feature type="region of interest" description="Disordered" evidence="2">
    <location>
        <begin position="46"/>
        <end position="89"/>
    </location>
</feature>
<feature type="compositionally biased region" description="Basic residues" evidence="2">
    <location>
        <begin position="60"/>
        <end position="71"/>
    </location>
</feature>
<sequence>MTTLETLKWDGKKSGKVTLDLTVAKETSSADLIHRAVLRQLANKRQGTASTLTRSEVRGGGRKPYKQKGTGRARQGSIRTPLRPGGGIIFGPKPRSYNLDMNRKERRLALRTALMSRVSDMKAVEDFGSTLKQPKTSDIINGLARLGIQKNEKVLVILDSPSDVIKKSINNIEKVKLIAADQLNVFDILNANKLLIGQSAIDKIQEVYAS</sequence>
<organism>
    <name type="scientific">Prochlorococcus marinus (strain MIT 9215)</name>
    <dbReference type="NCBI Taxonomy" id="93060"/>
    <lineage>
        <taxon>Bacteria</taxon>
        <taxon>Bacillati</taxon>
        <taxon>Cyanobacteriota</taxon>
        <taxon>Cyanophyceae</taxon>
        <taxon>Synechococcales</taxon>
        <taxon>Prochlorococcaceae</taxon>
        <taxon>Prochlorococcus</taxon>
    </lineage>
</organism>
<reference key="1">
    <citation type="journal article" date="2007" name="PLoS Genet.">
        <title>Patterns and implications of gene gain and loss in the evolution of Prochlorococcus.</title>
        <authorList>
            <person name="Kettler G.C."/>
            <person name="Martiny A.C."/>
            <person name="Huang K."/>
            <person name="Zucker J."/>
            <person name="Coleman M.L."/>
            <person name="Rodrigue S."/>
            <person name="Chen F."/>
            <person name="Lapidus A."/>
            <person name="Ferriera S."/>
            <person name="Johnson J."/>
            <person name="Steglich C."/>
            <person name="Church G.M."/>
            <person name="Richardson P."/>
            <person name="Chisholm S.W."/>
        </authorList>
    </citation>
    <scope>NUCLEOTIDE SEQUENCE [LARGE SCALE GENOMIC DNA]</scope>
    <source>
        <strain>MIT 9215</strain>
    </source>
</reference>
<accession>A8G761</accession>
<evidence type="ECO:0000255" key="1">
    <source>
        <dbReference type="HAMAP-Rule" id="MF_01328"/>
    </source>
</evidence>
<evidence type="ECO:0000256" key="2">
    <source>
        <dbReference type="SAM" id="MobiDB-lite"/>
    </source>
</evidence>
<evidence type="ECO:0000305" key="3"/>
<dbReference type="EMBL" id="CP000825">
    <property type="protein sequence ID" value="ABV51442.1"/>
    <property type="molecule type" value="Genomic_DNA"/>
</dbReference>
<dbReference type="RefSeq" id="WP_012008448.1">
    <property type="nucleotide sequence ID" value="NC_009840.1"/>
</dbReference>
<dbReference type="SMR" id="A8G761"/>
<dbReference type="STRING" id="93060.P9215_18291"/>
<dbReference type="KEGG" id="pmh:P9215_18291"/>
<dbReference type="eggNOG" id="COG0088">
    <property type="taxonomic scope" value="Bacteria"/>
</dbReference>
<dbReference type="HOGENOM" id="CLU_041575_5_2_3"/>
<dbReference type="OrthoDB" id="9803201at2"/>
<dbReference type="Proteomes" id="UP000002014">
    <property type="component" value="Chromosome"/>
</dbReference>
<dbReference type="GO" id="GO:1990904">
    <property type="term" value="C:ribonucleoprotein complex"/>
    <property type="evidence" value="ECO:0007669"/>
    <property type="project" value="UniProtKB-KW"/>
</dbReference>
<dbReference type="GO" id="GO:0005840">
    <property type="term" value="C:ribosome"/>
    <property type="evidence" value="ECO:0007669"/>
    <property type="project" value="UniProtKB-KW"/>
</dbReference>
<dbReference type="GO" id="GO:0019843">
    <property type="term" value="F:rRNA binding"/>
    <property type="evidence" value="ECO:0007669"/>
    <property type="project" value="UniProtKB-UniRule"/>
</dbReference>
<dbReference type="GO" id="GO:0003735">
    <property type="term" value="F:structural constituent of ribosome"/>
    <property type="evidence" value="ECO:0007669"/>
    <property type="project" value="InterPro"/>
</dbReference>
<dbReference type="GO" id="GO:0006412">
    <property type="term" value="P:translation"/>
    <property type="evidence" value="ECO:0007669"/>
    <property type="project" value="UniProtKB-UniRule"/>
</dbReference>
<dbReference type="Gene3D" id="3.40.1370.10">
    <property type="match status" value="1"/>
</dbReference>
<dbReference type="HAMAP" id="MF_01328_B">
    <property type="entry name" value="Ribosomal_uL4_B"/>
    <property type="match status" value="1"/>
</dbReference>
<dbReference type="InterPro" id="IPR002136">
    <property type="entry name" value="Ribosomal_uL4"/>
</dbReference>
<dbReference type="InterPro" id="IPR013005">
    <property type="entry name" value="Ribosomal_uL4-like"/>
</dbReference>
<dbReference type="InterPro" id="IPR023574">
    <property type="entry name" value="Ribosomal_uL4_dom_sf"/>
</dbReference>
<dbReference type="NCBIfam" id="TIGR03953">
    <property type="entry name" value="rplD_bact"/>
    <property type="match status" value="1"/>
</dbReference>
<dbReference type="PANTHER" id="PTHR10746">
    <property type="entry name" value="50S RIBOSOMAL PROTEIN L4"/>
    <property type="match status" value="1"/>
</dbReference>
<dbReference type="PANTHER" id="PTHR10746:SF17">
    <property type="entry name" value="LARGE RIBOSOMAL SUBUNIT PROTEIN UL4C"/>
    <property type="match status" value="1"/>
</dbReference>
<dbReference type="Pfam" id="PF00573">
    <property type="entry name" value="Ribosomal_L4"/>
    <property type="match status" value="1"/>
</dbReference>
<dbReference type="SUPFAM" id="SSF52166">
    <property type="entry name" value="Ribosomal protein L4"/>
    <property type="match status" value="1"/>
</dbReference>